<feature type="chain" id="PRO_0000126214" description="Large ribosomal subunit protein bL36">
    <location>
        <begin position="1"/>
        <end position="37"/>
    </location>
</feature>
<comment type="similarity">
    <text evidence="1">Belongs to the bacterial ribosomal protein bL36 family.</text>
</comment>
<evidence type="ECO:0000255" key="1">
    <source>
        <dbReference type="HAMAP-Rule" id="MF_00251"/>
    </source>
</evidence>
<evidence type="ECO:0000305" key="2"/>
<dbReference type="EMBL" id="L43967">
    <property type="protein sequence ID" value="AAC71393.1"/>
    <property type="molecule type" value="Genomic_DNA"/>
</dbReference>
<dbReference type="PIR" id="C64219">
    <property type="entry name" value="C64219"/>
</dbReference>
<dbReference type="RefSeq" id="WP_009885859.1">
    <property type="nucleotide sequence ID" value="NC_000908.2"/>
</dbReference>
<dbReference type="SMR" id="P47420"/>
<dbReference type="FunCoup" id="P47420">
    <property type="interactions" value="76"/>
</dbReference>
<dbReference type="STRING" id="243273.MG_174"/>
<dbReference type="GeneID" id="88282658"/>
<dbReference type="KEGG" id="mge:MG_174"/>
<dbReference type="eggNOG" id="COG0257">
    <property type="taxonomic scope" value="Bacteria"/>
</dbReference>
<dbReference type="HOGENOM" id="CLU_135723_6_2_14"/>
<dbReference type="InParanoid" id="P47420"/>
<dbReference type="OrthoDB" id="9802520at2"/>
<dbReference type="BioCyc" id="MGEN243273:G1GJ2-198-MONOMER"/>
<dbReference type="Proteomes" id="UP000000807">
    <property type="component" value="Chromosome"/>
</dbReference>
<dbReference type="GO" id="GO:0005737">
    <property type="term" value="C:cytoplasm"/>
    <property type="evidence" value="ECO:0007669"/>
    <property type="project" value="UniProtKB-ARBA"/>
</dbReference>
<dbReference type="GO" id="GO:1990904">
    <property type="term" value="C:ribonucleoprotein complex"/>
    <property type="evidence" value="ECO:0007669"/>
    <property type="project" value="UniProtKB-KW"/>
</dbReference>
<dbReference type="GO" id="GO:0005840">
    <property type="term" value="C:ribosome"/>
    <property type="evidence" value="ECO:0007669"/>
    <property type="project" value="UniProtKB-KW"/>
</dbReference>
<dbReference type="GO" id="GO:0003735">
    <property type="term" value="F:structural constituent of ribosome"/>
    <property type="evidence" value="ECO:0007669"/>
    <property type="project" value="InterPro"/>
</dbReference>
<dbReference type="GO" id="GO:0006412">
    <property type="term" value="P:translation"/>
    <property type="evidence" value="ECO:0007669"/>
    <property type="project" value="UniProtKB-UniRule"/>
</dbReference>
<dbReference type="HAMAP" id="MF_00251">
    <property type="entry name" value="Ribosomal_bL36"/>
    <property type="match status" value="1"/>
</dbReference>
<dbReference type="InterPro" id="IPR000473">
    <property type="entry name" value="Ribosomal_bL36"/>
</dbReference>
<dbReference type="InterPro" id="IPR035977">
    <property type="entry name" value="Ribosomal_bL36_sp"/>
</dbReference>
<dbReference type="NCBIfam" id="TIGR01022">
    <property type="entry name" value="rpmJ_bact"/>
    <property type="match status" value="1"/>
</dbReference>
<dbReference type="PANTHER" id="PTHR42888">
    <property type="entry name" value="50S RIBOSOMAL PROTEIN L36, CHLOROPLASTIC"/>
    <property type="match status" value="1"/>
</dbReference>
<dbReference type="PANTHER" id="PTHR42888:SF1">
    <property type="entry name" value="LARGE RIBOSOMAL SUBUNIT PROTEIN BL36C"/>
    <property type="match status" value="1"/>
</dbReference>
<dbReference type="Pfam" id="PF00444">
    <property type="entry name" value="Ribosomal_L36"/>
    <property type="match status" value="1"/>
</dbReference>
<dbReference type="SUPFAM" id="SSF57840">
    <property type="entry name" value="Ribosomal protein L36"/>
    <property type="match status" value="1"/>
</dbReference>
<dbReference type="PROSITE" id="PS00828">
    <property type="entry name" value="RIBOSOMAL_L36"/>
    <property type="match status" value="1"/>
</dbReference>
<keyword id="KW-1185">Reference proteome</keyword>
<keyword id="KW-0687">Ribonucleoprotein</keyword>
<keyword id="KW-0689">Ribosomal protein</keyword>
<proteinExistence type="inferred from homology"/>
<organism>
    <name type="scientific">Mycoplasma genitalium (strain ATCC 33530 / DSM 19775 / NCTC 10195 / G37)</name>
    <name type="common">Mycoplasmoides genitalium</name>
    <dbReference type="NCBI Taxonomy" id="243273"/>
    <lineage>
        <taxon>Bacteria</taxon>
        <taxon>Bacillati</taxon>
        <taxon>Mycoplasmatota</taxon>
        <taxon>Mycoplasmoidales</taxon>
        <taxon>Mycoplasmoidaceae</taxon>
        <taxon>Mycoplasmoides</taxon>
    </lineage>
</organism>
<protein>
    <recommendedName>
        <fullName evidence="1">Large ribosomal subunit protein bL36</fullName>
    </recommendedName>
    <alternativeName>
        <fullName evidence="2">50S ribosomal protein L36</fullName>
    </alternativeName>
</protein>
<gene>
    <name evidence="1" type="primary">rpmJ</name>
    <name type="synonym">rpl36</name>
    <name type="ordered locus">MG174</name>
</gene>
<sequence length="37" mass="4429">MKVRASVKPICKDCKIIKRHRILRVICKTKKHKQRQG</sequence>
<reference key="1">
    <citation type="journal article" date="1995" name="Science">
        <title>The minimal gene complement of Mycoplasma genitalium.</title>
        <authorList>
            <person name="Fraser C.M."/>
            <person name="Gocayne J.D."/>
            <person name="White O."/>
            <person name="Adams M.D."/>
            <person name="Clayton R.A."/>
            <person name="Fleischmann R.D."/>
            <person name="Bult C.J."/>
            <person name="Kerlavage A.R."/>
            <person name="Sutton G.G."/>
            <person name="Kelley J.M."/>
            <person name="Fritchman J.L."/>
            <person name="Weidman J.F."/>
            <person name="Small K.V."/>
            <person name="Sandusky M."/>
            <person name="Fuhrmann J.L."/>
            <person name="Nguyen D.T."/>
            <person name="Utterback T.R."/>
            <person name="Saudek D.M."/>
            <person name="Phillips C.A."/>
            <person name="Merrick J.M."/>
            <person name="Tomb J.-F."/>
            <person name="Dougherty B.A."/>
            <person name="Bott K.F."/>
            <person name="Hu P.-C."/>
            <person name="Lucier T.S."/>
            <person name="Peterson S.N."/>
            <person name="Smith H.O."/>
            <person name="Hutchison C.A. III"/>
            <person name="Venter J.C."/>
        </authorList>
    </citation>
    <scope>NUCLEOTIDE SEQUENCE [LARGE SCALE GENOMIC DNA]</scope>
    <source>
        <strain>ATCC 33530 / DSM 19775 / NCTC 10195 / G37</strain>
    </source>
</reference>
<accession>P47420</accession>
<name>RL36_MYCGE</name>